<name>NQO15_THET8</name>
<proteinExistence type="evidence at protein level"/>
<feature type="initiator methionine" description="Removed" evidence="2">
    <location>
        <position position="1"/>
    </location>
</feature>
<feature type="chain" id="PRO_0000233014" description="NADH-quinone oxidoreductase subunit 15">
    <location>
        <begin position="2"/>
        <end position="129"/>
    </location>
</feature>
<feature type="helix" evidence="5">
    <location>
        <begin position="5"/>
        <end position="26"/>
    </location>
</feature>
<feature type="strand" evidence="5">
    <location>
        <begin position="31"/>
        <end position="36"/>
    </location>
</feature>
<feature type="helix" evidence="5">
    <location>
        <begin position="38"/>
        <end position="41"/>
    </location>
</feature>
<feature type="strand" evidence="6">
    <location>
        <begin position="44"/>
        <end position="46"/>
    </location>
</feature>
<feature type="strand" evidence="5">
    <location>
        <begin position="53"/>
        <end position="60"/>
    </location>
</feature>
<feature type="strand" evidence="5">
    <location>
        <begin position="62"/>
        <end position="64"/>
    </location>
</feature>
<feature type="strand" evidence="5">
    <location>
        <begin position="66"/>
        <end position="72"/>
    </location>
</feature>
<feature type="strand" evidence="5">
    <location>
        <begin position="75"/>
        <end position="79"/>
    </location>
</feature>
<feature type="strand" evidence="5">
    <location>
        <begin position="82"/>
        <end position="86"/>
    </location>
</feature>
<feature type="turn" evidence="5">
    <location>
        <begin position="87"/>
        <end position="90"/>
    </location>
</feature>
<feature type="strand" evidence="5">
    <location>
        <begin position="91"/>
        <end position="98"/>
    </location>
</feature>
<feature type="turn" evidence="5">
    <location>
        <begin position="99"/>
        <end position="101"/>
    </location>
</feature>
<feature type="strand" evidence="5">
    <location>
        <begin position="102"/>
        <end position="105"/>
    </location>
</feature>
<feature type="helix" evidence="5">
    <location>
        <begin position="112"/>
        <end position="126"/>
    </location>
</feature>
<gene>
    <name type="primary">nqo15</name>
    <name type="ordered locus">TTHA0496</name>
</gene>
<comment type="function">
    <text evidence="1 2">NDH-1 shuttles electrons from NADH, via FMN and iron-sulfur (Fe-S) centers, to quinones in the respiratory chain. The immediate electron acceptor for the enzyme in this species is menaquinone. Couples the redox reaction to proton translocation (for every two electrons transferred, four hydrogen ions are translocated across the cytoplasmic membrane), and thus conserves the redox energy in a proton gradient required for the synthesis of ATP. The Nqo15 subunit has probably a role in complex stabilization, and may be also involved in the storage of iron for iron-sulfur cluster regeneration in the complex.</text>
</comment>
<comment type="catalytic activity">
    <reaction>
        <text>a quinone + NADH + 5 H(+)(in) = a quinol + NAD(+) + 4 H(+)(out)</text>
        <dbReference type="Rhea" id="RHEA:57888"/>
        <dbReference type="ChEBI" id="CHEBI:15378"/>
        <dbReference type="ChEBI" id="CHEBI:24646"/>
        <dbReference type="ChEBI" id="CHEBI:57540"/>
        <dbReference type="ChEBI" id="CHEBI:57945"/>
        <dbReference type="ChEBI" id="CHEBI:132124"/>
    </reaction>
</comment>
<comment type="subunit">
    <text evidence="1 2">NDH-1 is composed of 15 different subunits, Nqo1 to Nqo15. The complex has a L-shaped structure, with the hydrophobic arm (subunits Nqo7, Nqo8 and Nqo10 to Nqo14) embedded in the membrane and the hydrophilic peripheral arm (subunits Nqo1 to Nqo6, Nqo9 and Nqo15) protruding into the bacterial cytoplasm. The hydrophilic domain contains all the redox centers. Nqo15 is bound to the side of the complex near the N-terminus of Nqo3, where it interacts with subunits Nqo3, Nqo2, Nqo1, Nqo9 and Nqo4.</text>
</comment>
<comment type="subcellular location">
    <subcellularLocation>
        <location evidence="4">Cell membrane</location>
        <topology evidence="4">Peripheral membrane protein</topology>
        <orientation evidence="4">Cytoplasmic side</orientation>
    </subcellularLocation>
</comment>
<comment type="domain">
    <text evidence="4">Has a similar fold to the mitochondrial iron chaperone frataxin.</text>
</comment>
<comment type="similarity">
    <text evidence="3">Belongs to the complex I Nqo15 family.</text>
</comment>
<evidence type="ECO:0000269" key="1">
    <source>
    </source>
</evidence>
<evidence type="ECO:0000269" key="2">
    <source>
    </source>
</evidence>
<evidence type="ECO:0000305" key="3"/>
<evidence type="ECO:0000305" key="4">
    <source>
    </source>
</evidence>
<evidence type="ECO:0007829" key="5">
    <source>
        <dbReference type="PDB" id="3I9V"/>
    </source>
</evidence>
<evidence type="ECO:0007829" key="6">
    <source>
        <dbReference type="PDB" id="6Y11"/>
    </source>
</evidence>
<accession>Q5SKZ7</accession>
<organism>
    <name type="scientific">Thermus thermophilus (strain ATCC 27634 / DSM 579 / HB8)</name>
    <dbReference type="NCBI Taxonomy" id="300852"/>
    <lineage>
        <taxon>Bacteria</taxon>
        <taxon>Thermotogati</taxon>
        <taxon>Deinococcota</taxon>
        <taxon>Deinococci</taxon>
        <taxon>Thermales</taxon>
        <taxon>Thermaceae</taxon>
        <taxon>Thermus</taxon>
    </lineage>
</organism>
<reference key="1">
    <citation type="submission" date="2004-11" db="EMBL/GenBank/DDBJ databases">
        <title>Complete genome sequence of Thermus thermophilus HB8.</title>
        <authorList>
            <person name="Masui R."/>
            <person name="Kurokawa K."/>
            <person name="Nakagawa N."/>
            <person name="Tokunaga F."/>
            <person name="Koyama Y."/>
            <person name="Shibata T."/>
            <person name="Oshima T."/>
            <person name="Yokoyama S."/>
            <person name="Yasunaga T."/>
            <person name="Kuramitsu S."/>
        </authorList>
    </citation>
    <scope>NUCLEOTIDE SEQUENCE [LARGE SCALE GENOMIC DNA]</scope>
    <source>
        <strain>ATCC 27634 / DSM 579 / HB8</strain>
    </source>
</reference>
<reference key="2">
    <citation type="journal article" date="2006" name="Biochemistry">
        <title>Identification of a novel subunit of respiratory complex I from Thermus thermophilus.</title>
        <authorList>
            <person name="Hinchliffe P."/>
            <person name="Carroll J."/>
            <person name="Sazanov L.A."/>
        </authorList>
    </citation>
    <scope>PROTEIN SEQUENCE OF 2-9</scope>
    <scope>CHARACTERIZATION</scope>
    <scope>IDENTIFICATION BY MASS SPECTROMETRY</scope>
    <scope>SUBUNIT</scope>
    <source>
        <strain>ATCC 27634 / DSM 579 / HB8</strain>
    </source>
</reference>
<reference key="3">
    <citation type="journal article" date="2006" name="Science">
        <title>Structure of the hydrophilic domain of respiratory complex I from Thermus thermophilus.</title>
        <authorList>
            <person name="Sazanov L.A."/>
            <person name="Hinchliffe P."/>
        </authorList>
    </citation>
    <scope>X-RAY CRYSTALLOGRAPHY (3.3 ANGSTROMS) OF ENZYME HYDROPHILIC DOMAIN</scope>
    <scope>FUNCTION</scope>
    <scope>SUBUNIT</scope>
    <scope>SUBCELLULAR LOCATION</scope>
    <scope>DOMAIN</scope>
    <scope>ELECTRON TRANSFER MECHANISM</scope>
</reference>
<protein>
    <recommendedName>
        <fullName>NADH-quinone oxidoreductase subunit 15</fullName>
        <ecNumber>7.1.1.-</ecNumber>
    </recommendedName>
    <alternativeName>
        <fullName>NADH dehydrogenase I chain 15</fullName>
    </alternativeName>
    <alternativeName>
        <fullName>NDH-1 subunit 15</fullName>
    </alternativeName>
</protein>
<sequence length="129" mass="14788">MSASSERELYEAWVELLSWMREYAQAKGVRFEKEADFPDFIYRMERPYDLPTTIMTASLSDGLGEPFLLADVSPRHAKLKRIGLRLPRAHIHLHAHYEPGKGLVTGKIPLTKERFFALADRAREALAFA</sequence>
<dbReference type="EC" id="7.1.1.-"/>
<dbReference type="EMBL" id="AP008226">
    <property type="protein sequence ID" value="BAD70319.1"/>
    <property type="molecule type" value="Genomic_DNA"/>
</dbReference>
<dbReference type="RefSeq" id="WP_011227977.1">
    <property type="nucleotide sequence ID" value="NC_006461.1"/>
</dbReference>
<dbReference type="RefSeq" id="YP_143762.1">
    <property type="nucleotide sequence ID" value="NC_006461.1"/>
</dbReference>
<dbReference type="PDB" id="2FUG">
    <property type="method" value="X-ray"/>
    <property type="resolution" value="3.30 A"/>
    <property type="chains" value="7/H/Q/Z=1-129"/>
</dbReference>
<dbReference type="PDB" id="2YBB">
    <property type="method" value="EM"/>
    <property type="resolution" value="19.00 A"/>
    <property type="chains" value="7=1-129"/>
</dbReference>
<dbReference type="PDB" id="3I9V">
    <property type="method" value="X-ray"/>
    <property type="resolution" value="3.10 A"/>
    <property type="chains" value="7/H=1-129"/>
</dbReference>
<dbReference type="PDB" id="3IAM">
    <property type="method" value="X-ray"/>
    <property type="resolution" value="3.10 A"/>
    <property type="chains" value="7/H=1-129"/>
</dbReference>
<dbReference type="PDB" id="3IAS">
    <property type="method" value="X-ray"/>
    <property type="resolution" value="3.15 A"/>
    <property type="chains" value="7/H/Q/Z=1-129"/>
</dbReference>
<dbReference type="PDB" id="3M9S">
    <property type="method" value="X-ray"/>
    <property type="resolution" value="4.50 A"/>
    <property type="chains" value="7/J=1-129"/>
</dbReference>
<dbReference type="PDB" id="4HEA">
    <property type="method" value="X-ray"/>
    <property type="resolution" value="3.30 A"/>
    <property type="chains" value="7/I=1-129"/>
</dbReference>
<dbReference type="PDB" id="6I0D">
    <property type="method" value="X-ray"/>
    <property type="resolution" value="3.60 A"/>
    <property type="chains" value="7/I=1-129"/>
</dbReference>
<dbReference type="PDB" id="6I1P">
    <property type="method" value="X-ray"/>
    <property type="resolution" value="3.21 A"/>
    <property type="chains" value="7/I=1-129"/>
</dbReference>
<dbReference type="PDB" id="6Q8O">
    <property type="method" value="X-ray"/>
    <property type="resolution" value="3.60 A"/>
    <property type="chains" value="7/I=1-129"/>
</dbReference>
<dbReference type="PDB" id="6Q8W">
    <property type="method" value="X-ray"/>
    <property type="resolution" value="3.40 A"/>
    <property type="chains" value="7/I=1-129"/>
</dbReference>
<dbReference type="PDB" id="6Q8X">
    <property type="method" value="X-ray"/>
    <property type="resolution" value="3.51 A"/>
    <property type="chains" value="7/I=1-129"/>
</dbReference>
<dbReference type="PDB" id="6Y11">
    <property type="method" value="X-ray"/>
    <property type="resolution" value="3.11 A"/>
    <property type="chains" value="7/I=1-129"/>
</dbReference>
<dbReference type="PDB" id="6ZIY">
    <property type="method" value="EM"/>
    <property type="resolution" value="4.25 A"/>
    <property type="chains" value="7=1-129"/>
</dbReference>
<dbReference type="PDB" id="6ZJL">
    <property type="method" value="EM"/>
    <property type="resolution" value="4.30 A"/>
    <property type="chains" value="7=1-129"/>
</dbReference>
<dbReference type="PDB" id="6ZJN">
    <property type="method" value="EM"/>
    <property type="resolution" value="6.10 A"/>
    <property type="chains" value="7=1-129"/>
</dbReference>
<dbReference type="PDB" id="6ZJY">
    <property type="method" value="EM"/>
    <property type="resolution" value="5.50 A"/>
    <property type="chains" value="7=1-129"/>
</dbReference>
<dbReference type="PDBsum" id="2FUG"/>
<dbReference type="PDBsum" id="2YBB"/>
<dbReference type="PDBsum" id="3I9V"/>
<dbReference type="PDBsum" id="3IAM"/>
<dbReference type="PDBsum" id="3IAS"/>
<dbReference type="PDBsum" id="3M9S"/>
<dbReference type="PDBsum" id="4HEA"/>
<dbReference type="PDBsum" id="6I0D"/>
<dbReference type="PDBsum" id="6I1P"/>
<dbReference type="PDBsum" id="6Q8O"/>
<dbReference type="PDBsum" id="6Q8W"/>
<dbReference type="PDBsum" id="6Q8X"/>
<dbReference type="PDBsum" id="6Y11"/>
<dbReference type="PDBsum" id="6ZIY"/>
<dbReference type="PDBsum" id="6ZJL"/>
<dbReference type="PDBsum" id="6ZJN"/>
<dbReference type="PDBsum" id="6ZJY"/>
<dbReference type="EMDB" id="EMD-11231"/>
<dbReference type="EMDB" id="EMD-11235"/>
<dbReference type="EMDB" id="EMD-11237"/>
<dbReference type="EMDB" id="EMD-11238"/>
<dbReference type="SMR" id="Q5SKZ7"/>
<dbReference type="DIP" id="DIP-59273N"/>
<dbReference type="IntAct" id="Q5SKZ7">
    <property type="interactions" value="1"/>
</dbReference>
<dbReference type="TCDB" id="3.D.1.3.1">
    <property type="family name" value="the h+ or na+-translocating nadh dehydrogenase (ndh) family"/>
</dbReference>
<dbReference type="EnsemblBacteria" id="BAD70319">
    <property type="protein sequence ID" value="BAD70319"/>
    <property type="gene ID" value="BAD70319"/>
</dbReference>
<dbReference type="GeneID" id="3169322"/>
<dbReference type="KEGG" id="ttj:TTHA0496"/>
<dbReference type="PATRIC" id="fig|300852.9.peg.494"/>
<dbReference type="eggNOG" id="ENOG50325PM">
    <property type="taxonomic scope" value="Bacteria"/>
</dbReference>
<dbReference type="HOGENOM" id="CLU_132697_0_0_0"/>
<dbReference type="EvolutionaryTrace" id="Q5SKZ7"/>
<dbReference type="Proteomes" id="UP000000532">
    <property type="component" value="Chromosome"/>
</dbReference>
<dbReference type="GO" id="GO:0005886">
    <property type="term" value="C:plasma membrane"/>
    <property type="evidence" value="ECO:0007669"/>
    <property type="project" value="UniProtKB-SubCell"/>
</dbReference>
<dbReference type="GO" id="GO:0008199">
    <property type="term" value="F:ferric iron binding"/>
    <property type="evidence" value="ECO:0007669"/>
    <property type="project" value="InterPro"/>
</dbReference>
<dbReference type="GO" id="GO:0048038">
    <property type="term" value="F:quinone binding"/>
    <property type="evidence" value="ECO:0007669"/>
    <property type="project" value="UniProtKB-KW"/>
</dbReference>
<dbReference type="GO" id="GO:0016226">
    <property type="term" value="P:iron-sulfur cluster assembly"/>
    <property type="evidence" value="ECO:0007669"/>
    <property type="project" value="InterPro"/>
</dbReference>
<dbReference type="Gene3D" id="3.30.920.80">
    <property type="entry name" value="NADH-quinone oxidoreductase, subunit 15"/>
    <property type="match status" value="1"/>
</dbReference>
<dbReference type="InterPro" id="IPR036524">
    <property type="entry name" value="Frataxin/CyaY_sf"/>
</dbReference>
<dbReference type="InterPro" id="IPR021093">
    <property type="entry name" value="NADH_quinone_OxRdtase_su15"/>
</dbReference>
<dbReference type="InterPro" id="IPR038458">
    <property type="entry name" value="NADH_quinone_OxRdtase_su15_sf"/>
</dbReference>
<dbReference type="Pfam" id="PF11497">
    <property type="entry name" value="NADH_Oxid_Nqo15"/>
    <property type="match status" value="1"/>
</dbReference>
<dbReference type="SUPFAM" id="SSF55387">
    <property type="entry name" value="Frataxin/Nqo15-like"/>
    <property type="match status" value="1"/>
</dbReference>
<keyword id="KW-0002">3D-structure</keyword>
<keyword id="KW-1003">Cell membrane</keyword>
<keyword id="KW-0903">Direct protein sequencing</keyword>
<keyword id="KW-0472">Membrane</keyword>
<keyword id="KW-0520">NAD</keyword>
<keyword id="KW-0874">Quinone</keyword>
<keyword id="KW-1185">Reference proteome</keyword>
<keyword id="KW-1278">Translocase</keyword>